<accession>O50146</accession>
<accession>Q9ZND6</accession>
<evidence type="ECO:0000255" key="1">
    <source>
        <dbReference type="HAMAP-Rule" id="MF_02083"/>
    </source>
</evidence>
<evidence type="ECO:0000269" key="2">
    <source>
    </source>
</evidence>
<evidence type="ECO:0000269" key="3">
    <source>
    </source>
</evidence>
<evidence type="ECO:0000303" key="4">
    <source>
    </source>
</evidence>
<evidence type="ECO:0000303" key="5">
    <source>
    </source>
</evidence>
<evidence type="ECO:0000303" key="6">
    <source>
    </source>
</evidence>
<evidence type="ECO:0000305" key="7"/>
<evidence type="ECO:0000305" key="8">
    <source>
    </source>
</evidence>
<evidence type="ECO:0000305" key="9">
    <source>
    </source>
</evidence>
<evidence type="ECO:0007744" key="10">
    <source>
        <dbReference type="PDB" id="5EIN"/>
    </source>
</evidence>
<evidence type="ECO:0007744" key="11">
    <source>
        <dbReference type="PDB" id="5EIO"/>
    </source>
</evidence>
<evidence type="ECO:0007829" key="12">
    <source>
        <dbReference type="PDB" id="5EIN"/>
    </source>
</evidence>
<evidence type="ECO:0007829" key="13">
    <source>
        <dbReference type="PDB" id="5EIO"/>
    </source>
</evidence>
<gene>
    <name evidence="1 5" type="primary">lysY</name>
    <name evidence="4 6" type="synonym">argC</name>
    <name type="ordered locus">TT_C1542</name>
</gene>
<proteinExistence type="evidence at protein level"/>
<protein>
    <recommendedName>
        <fullName evidence="1 7">[LysW]-L-2-aminoadipate 6-phosphate reductase</fullName>
        <ecNumber evidence="1 3 8">1.2.1.103</ecNumber>
    </recommendedName>
</protein>
<sequence length="344" mass="38051">MDKKTLSIVGASGYAGGEFLRLALSHPYLEVKQVTSRRFAGEPVHFVHPNLRGRTNLKFIPPEKLEPADILVLALPHGVFAREFDRYSALAPILIDLSADFRLKDPELYRRYYGEHPRPDLLGCFVYAVPELYREALKGADWIAGAGCNATATLLGLYPLLKAGVLKPTPIFVTLLISTSAAGAEASPASHHPERAGSIRVYKPTGHRHTAEVVENLPGRPEVHLTAIATDRVRGILMTAQCFVQDGWSERDVWQAYREAYAGEPFIRLVKQKKGVHRYPDPRFVQGTNYADIGFELEEDTGRLVVMTAIDNLVKGTAGHALQALNVRMGWPETLGLDFPGLHP</sequence>
<keyword id="KW-0002">3D-structure</keyword>
<keyword id="KW-0028">Amino-acid biosynthesis</keyword>
<keyword id="KW-0963">Cytoplasm</keyword>
<keyword id="KW-0457">Lysine biosynthesis</keyword>
<keyword id="KW-0521">NADP</keyword>
<keyword id="KW-0560">Oxidoreductase</keyword>
<reference key="1">
    <citation type="journal article" date="2004" name="Nat. Biotechnol.">
        <title>The genome sequence of the extreme thermophile Thermus thermophilus.</title>
        <authorList>
            <person name="Henne A."/>
            <person name="Brueggemann H."/>
            <person name="Raasch C."/>
            <person name="Wiezer A."/>
            <person name="Hartsch T."/>
            <person name="Liesegang H."/>
            <person name="Johann A."/>
            <person name="Lienard T."/>
            <person name="Gohl O."/>
            <person name="Martinez-Arias R."/>
            <person name="Jacobi C."/>
            <person name="Starkuviene V."/>
            <person name="Schlenczeck S."/>
            <person name="Dencker S."/>
            <person name="Huber R."/>
            <person name="Klenk H.-P."/>
            <person name="Kramer W."/>
            <person name="Merkl R."/>
            <person name="Gottschalk G."/>
            <person name="Fritz H.-J."/>
        </authorList>
    </citation>
    <scope>NUCLEOTIDE SEQUENCE [LARGE SCALE GENOMIC DNA]</scope>
    <source>
        <strain>ATCC BAA-163 / DSM 7039 / HB27</strain>
    </source>
</reference>
<reference key="2">
    <citation type="journal article" date="1999" name="J. Bacteriol.">
        <title>Aspartate kinase-independent lysine synthesis in an extremely thermophilic bacterium, Thermus thermophilus: lysine is synthesized via alpha-aminoadipic acid not via diaminopimelic acid.</title>
        <authorList>
            <person name="Kobashi N."/>
            <person name="Nishiyama M."/>
            <person name="Tanokura M."/>
        </authorList>
    </citation>
    <scope>NUCLEOTIDE SEQUENCE [GENOMIC DNA] OF 1-236</scope>
</reference>
<reference key="3">
    <citation type="journal article" date="1997" name="FEMS Microbiol. Lett.">
        <title>Molecular cloning and sequence analysis of the lysR gene from the extremely thermophilic eubacterium, Thermus thermophilus HB27.</title>
        <authorList>
            <person name="Kosuge T."/>
            <person name="Hoshino T."/>
        </authorList>
    </citation>
    <scope>NUCLEOTIDE SEQUENCE [GENOMIC DNA] OF 35-344</scope>
    <source>
        <strain>ATCC BAA-163 / DSM 7039 / HB27</strain>
    </source>
</reference>
<reference key="4">
    <citation type="journal article" date="2009" name="Nat. Chem. Biol.">
        <title>Discovery of proteinaceous N-modification in lysine biosynthesis of Thermus thermophilus.</title>
        <authorList>
            <person name="Horie A."/>
            <person name="Tomita T."/>
            <person name="Saiki A."/>
            <person name="Kono H."/>
            <person name="Taka H."/>
            <person name="Mineki R."/>
            <person name="Fujimura T."/>
            <person name="Nishiyama C."/>
            <person name="Kuzuyama T."/>
            <person name="Nishiyama M."/>
        </authorList>
    </citation>
    <scope>FUNCTION</scope>
    <scope>CATALYTIC ACTIVITY</scope>
    <scope>PATHWAY</scope>
    <source>
        <strain>ATCC BAA-163 / DSM 7039 / HB27</strain>
    </source>
</reference>
<reference evidence="10 11" key="5">
    <citation type="journal article" date="2016" name="J. Biol. Chem.">
        <title>Crystal structure of the LysYLysW complex from Thermus thermophilus.</title>
        <authorList>
            <person name="Shimizu T."/>
            <person name="Tomita T."/>
            <person name="Kuzuyama T."/>
            <person name="Nishiyama M."/>
        </authorList>
    </citation>
    <scope>X-RAY CRYSTALLOGRAPHY (1.70 ANGSTROMS) IN COMPLEX WITH LYSW-AASA AND NADP AND OF MUTANT ALA-148 IN COMPLEX WITH SUBSTRATE ANALOG AND NADP</scope>
    <scope>FUNCTION</scope>
    <scope>CATALYTIC ACTIVITY</scope>
    <scope>BIOPHYSICOCHEMICAL PROPERTIES</scope>
    <scope>SUBUNIT</scope>
    <scope>INTERACTION WITH LYSW</scope>
    <scope>MUTAGENESIS OF ARG-102; CYS-148; ARG-195; HIS-209; ARG-258; LYS-271 AND ARG-278</scope>
    <source>
        <strain>ATCC BAA-163 / DSM 7039 / HB27</strain>
    </source>
</reference>
<comment type="function">
    <text evidence="1 3 8">Catalyzes the NADPH-dependent reduction of [LysW]-aminoadipate 6-phosphate to yield [LysW]-aminoadipate 6-semialdehyde.</text>
</comment>
<comment type="catalytic activity">
    <reaction evidence="1 3 8">
        <text>[amino-group carrier protein]-C-terminal-N-(1-carboxy-5-oxopentan-1-yl)-L-glutamine + phosphate + NADP(+) = [amino-group carrier protein]-C-terminal-N-(1-carboxy-5-phosphooxy-5-oxopentan-1-yl)-L-glutamine + NADPH + H(+)</text>
        <dbReference type="Rhea" id="RHEA:41948"/>
        <dbReference type="Rhea" id="RHEA-COMP:9712"/>
        <dbReference type="Rhea" id="RHEA-COMP:9714"/>
        <dbReference type="ChEBI" id="CHEBI:15378"/>
        <dbReference type="ChEBI" id="CHEBI:43474"/>
        <dbReference type="ChEBI" id="CHEBI:57783"/>
        <dbReference type="ChEBI" id="CHEBI:58349"/>
        <dbReference type="ChEBI" id="CHEBI:78499"/>
        <dbReference type="ChEBI" id="CHEBI:78501"/>
        <dbReference type="EC" id="1.2.1.103"/>
    </reaction>
</comment>
<comment type="biophysicochemical properties">
    <kinetics>
        <KM evidence="3">9.8 uM for [LysW]-aminoadipate 6-semialdehyde</KM>
        <KM evidence="3">14 uM for NADP(+)</KM>
        <KM evidence="3">12000 uM for phosphate</KM>
        <text evidence="3">kcat is 0.96 sec(-1).</text>
    </kinetics>
</comment>
<comment type="pathway">
    <text evidence="1 2">Amino-acid biosynthesis; L-lysine biosynthesis via AAA pathway; L-lysine from L-alpha-aminoadipate (Thermus route): step 3/5.</text>
</comment>
<comment type="subunit">
    <text evidence="3">Homotetramer (PubMed:26966182). Interacts with LysW. May form a ternary complex with LysW and LysZ (PubMed:26966182).</text>
</comment>
<comment type="subcellular location">
    <subcellularLocation>
        <location evidence="1">Cytoplasm</location>
    </subcellularLocation>
</comment>
<comment type="similarity">
    <text evidence="1 7">Belongs to the NAGSA dehydrogenase family. Type 1 subfamily. LysY sub-subfamily.</text>
</comment>
<comment type="sequence caution" evidence="7">
    <conflict type="erroneous initiation">
        <sequence resource="EMBL-CDS" id="BAA23878"/>
    </conflict>
</comment>
<dbReference type="EC" id="1.2.1.103" evidence="1 3 8"/>
<dbReference type="EMBL" id="AE017221">
    <property type="protein sequence ID" value="AAS81884.1"/>
    <property type="molecule type" value="Genomic_DNA"/>
</dbReference>
<dbReference type="EMBL" id="AB017109">
    <property type="protein sequence ID" value="BAA74767.1"/>
    <property type="molecule type" value="mRNA"/>
</dbReference>
<dbReference type="EMBL" id="AB006681">
    <property type="protein sequence ID" value="BAA23878.1"/>
    <property type="status" value="ALT_INIT"/>
    <property type="molecule type" value="Genomic_DNA"/>
</dbReference>
<dbReference type="PIR" id="T43947">
    <property type="entry name" value="T43947"/>
</dbReference>
<dbReference type="RefSeq" id="WP_011173916.1">
    <property type="nucleotide sequence ID" value="NC_005835.1"/>
</dbReference>
<dbReference type="PDB" id="5EIN">
    <property type="method" value="X-ray"/>
    <property type="resolution" value="1.70 A"/>
    <property type="chains" value="A/B=1-344"/>
</dbReference>
<dbReference type="PDB" id="5EIO">
    <property type="method" value="X-ray"/>
    <property type="resolution" value="1.80 A"/>
    <property type="chains" value="A/B=1-344"/>
</dbReference>
<dbReference type="PDBsum" id="5EIN"/>
<dbReference type="PDBsum" id="5EIO"/>
<dbReference type="SMR" id="O50146"/>
<dbReference type="KEGG" id="tth:TT_C1542"/>
<dbReference type="eggNOG" id="COG0002">
    <property type="taxonomic scope" value="Bacteria"/>
</dbReference>
<dbReference type="HOGENOM" id="CLU_006384_0_1_0"/>
<dbReference type="OrthoDB" id="9801289at2"/>
<dbReference type="BioCyc" id="MetaCyc:MONOMER-6802"/>
<dbReference type="BRENDA" id="1.2.1.103">
    <property type="organism ID" value="2305"/>
</dbReference>
<dbReference type="BRENDA" id="1.2.1.106">
    <property type="organism ID" value="2305"/>
</dbReference>
<dbReference type="UniPathway" id="UPA00033">
    <property type="reaction ID" value="UER00037"/>
</dbReference>
<dbReference type="EvolutionaryTrace" id="O50146"/>
<dbReference type="Proteomes" id="UP000000592">
    <property type="component" value="Chromosome"/>
</dbReference>
<dbReference type="GO" id="GO:0005737">
    <property type="term" value="C:cytoplasm"/>
    <property type="evidence" value="ECO:0007669"/>
    <property type="project" value="UniProtKB-SubCell"/>
</dbReference>
<dbReference type="GO" id="GO:0043870">
    <property type="term" value="F:N-acetyl-gamma-aminoadipyl-phosphate reductase activity"/>
    <property type="evidence" value="ECO:0007669"/>
    <property type="project" value="RHEA"/>
</dbReference>
<dbReference type="GO" id="GO:0003942">
    <property type="term" value="F:N-acetyl-gamma-glutamyl-phosphate reductase activity"/>
    <property type="evidence" value="ECO:0007669"/>
    <property type="project" value="InterPro"/>
</dbReference>
<dbReference type="GO" id="GO:0051287">
    <property type="term" value="F:NAD binding"/>
    <property type="evidence" value="ECO:0007669"/>
    <property type="project" value="InterPro"/>
</dbReference>
<dbReference type="GO" id="GO:0070401">
    <property type="term" value="F:NADP+ binding"/>
    <property type="evidence" value="ECO:0007669"/>
    <property type="project" value="InterPro"/>
</dbReference>
<dbReference type="GO" id="GO:0006526">
    <property type="term" value="P:L-arginine biosynthetic process"/>
    <property type="evidence" value="ECO:0007669"/>
    <property type="project" value="InterPro"/>
</dbReference>
<dbReference type="GO" id="GO:0019878">
    <property type="term" value="P:lysine biosynthetic process via aminoadipic acid"/>
    <property type="evidence" value="ECO:0007669"/>
    <property type="project" value="UniProtKB-UniRule"/>
</dbReference>
<dbReference type="CDD" id="cd23939">
    <property type="entry name" value="AGPR_1_C_LysY"/>
    <property type="match status" value="1"/>
</dbReference>
<dbReference type="CDD" id="cd24151">
    <property type="entry name" value="AGPR_1_N_LysY"/>
    <property type="match status" value="1"/>
</dbReference>
<dbReference type="Gene3D" id="3.30.360.10">
    <property type="entry name" value="Dihydrodipicolinate Reductase, domain 2"/>
    <property type="match status" value="1"/>
</dbReference>
<dbReference type="Gene3D" id="3.40.50.720">
    <property type="entry name" value="NAD(P)-binding Rossmann-like Domain"/>
    <property type="match status" value="1"/>
</dbReference>
<dbReference type="HAMAP" id="MF_00150">
    <property type="entry name" value="ArgC_type1"/>
    <property type="match status" value="1"/>
</dbReference>
<dbReference type="HAMAP" id="MF_02083">
    <property type="entry name" value="LysY"/>
    <property type="match status" value="1"/>
</dbReference>
<dbReference type="InterPro" id="IPR023013">
    <property type="entry name" value="AGPR_AS"/>
</dbReference>
<dbReference type="InterPro" id="IPR000706">
    <property type="entry name" value="AGPR_type-1"/>
</dbReference>
<dbReference type="InterPro" id="IPR037535">
    <property type="entry name" value="LysY"/>
</dbReference>
<dbReference type="InterPro" id="IPR036291">
    <property type="entry name" value="NAD(P)-bd_dom_sf"/>
</dbReference>
<dbReference type="InterPro" id="IPR050085">
    <property type="entry name" value="NAGSA_dehydrogenase"/>
</dbReference>
<dbReference type="InterPro" id="IPR000534">
    <property type="entry name" value="Semialdehyde_DH_NAD-bd"/>
</dbReference>
<dbReference type="NCBIfam" id="TIGR01850">
    <property type="entry name" value="argC"/>
    <property type="match status" value="1"/>
</dbReference>
<dbReference type="PANTHER" id="PTHR32338:SF11">
    <property type="entry name" value="[LYSW]-L-2-AMINOADIPATE_[LYSW]-L-GLUTAMATE PHOSPHATE REDUCTASE-RELATED"/>
    <property type="match status" value="1"/>
</dbReference>
<dbReference type="PANTHER" id="PTHR32338">
    <property type="entry name" value="N-ACETYL-GAMMA-GLUTAMYL-PHOSPHATE REDUCTASE, CHLOROPLASTIC-RELATED-RELATED"/>
    <property type="match status" value="1"/>
</dbReference>
<dbReference type="Pfam" id="PF01118">
    <property type="entry name" value="Semialdhyde_dh"/>
    <property type="match status" value="1"/>
</dbReference>
<dbReference type="Pfam" id="PF22698">
    <property type="entry name" value="Semialdhyde_dhC_1"/>
    <property type="match status" value="1"/>
</dbReference>
<dbReference type="SMART" id="SM00859">
    <property type="entry name" value="Semialdhyde_dh"/>
    <property type="match status" value="1"/>
</dbReference>
<dbReference type="SUPFAM" id="SSF55347">
    <property type="entry name" value="Glyceraldehyde-3-phosphate dehydrogenase-like, C-terminal domain"/>
    <property type="match status" value="1"/>
</dbReference>
<dbReference type="SUPFAM" id="SSF51735">
    <property type="entry name" value="NAD(P)-binding Rossmann-fold domains"/>
    <property type="match status" value="1"/>
</dbReference>
<dbReference type="PROSITE" id="PS01224">
    <property type="entry name" value="ARGC"/>
    <property type="match status" value="1"/>
</dbReference>
<feature type="chain" id="PRO_0000112501" description="[LysW]-L-2-aminoadipate 6-phosphate reductase">
    <location>
        <begin position="1"/>
        <end position="344"/>
    </location>
</feature>
<feature type="active site" evidence="1 9">
    <location>
        <position position="148"/>
    </location>
</feature>
<feature type="binding site" evidence="1 3">
    <location>
        <begin position="12"/>
        <end position="15"/>
    </location>
    <ligand>
        <name>NADP(+)</name>
        <dbReference type="ChEBI" id="CHEBI:58349"/>
    </ligand>
</feature>
<feature type="binding site" evidence="1 3">
    <location>
        <begin position="36"/>
        <end position="38"/>
    </location>
    <ligand>
        <name>NADP(+)</name>
        <dbReference type="ChEBI" id="CHEBI:58349"/>
    </ligand>
</feature>
<feature type="binding site" evidence="3">
    <location>
        <position position="75"/>
    </location>
    <ligand>
        <name>NADP(+)</name>
        <dbReference type="ChEBI" id="CHEBI:58349"/>
    </ligand>
</feature>
<feature type="binding site" evidence="3">
    <location>
        <position position="180"/>
    </location>
    <ligand>
        <name>NADP(+)</name>
        <dbReference type="ChEBI" id="CHEBI:58349"/>
    </ligand>
</feature>
<feature type="binding site" evidence="3">
    <location>
        <position position="184"/>
    </location>
    <ligand>
        <name>NADP(+)</name>
        <dbReference type="ChEBI" id="CHEBI:58349"/>
    </ligand>
</feature>
<feature type="binding site" evidence="1 3">
    <location>
        <position position="312"/>
    </location>
    <ligand>
        <name>NADP(+)</name>
        <dbReference type="ChEBI" id="CHEBI:58349"/>
    </ligand>
</feature>
<feature type="mutagenesis site" description="Strong decrease in activity." evidence="3">
    <original>R</original>
    <variation>A</variation>
    <location>
        <position position="102"/>
    </location>
</feature>
<feature type="mutagenesis site" description="Lack of activity." evidence="3">
    <original>C</original>
    <variation>A</variation>
    <location>
        <position position="148"/>
    </location>
</feature>
<feature type="mutagenesis site" description="5-fold decrease in kcat and 40-fold increase in Km for [LysW]-aminoadipate 6-semialdehyde." evidence="3">
    <original>R</original>
    <variation>A</variation>
    <location>
        <position position="195"/>
    </location>
</feature>
<feature type="mutagenesis site" description="Does not affect activity under basic conditions. Strong decrease of activity under neutral conditions." evidence="3">
    <original>H</original>
    <variation>A</variation>
    <location>
        <position position="209"/>
    </location>
</feature>
<feature type="mutagenesis site" description="Slight decrease in kcat and 17-fold increase in Km for [LysW]-aminoadipate 6-semialdehyde." evidence="3">
    <original>R</original>
    <variation>A</variation>
    <location>
        <position position="258"/>
    </location>
</feature>
<feature type="mutagenesis site" description="5-fold decrease in kcat and 70-fold increase in Km for [LysW]-aminoadipate 6-semialdehyde." evidence="3">
    <original>K</original>
    <variation>A</variation>
    <location>
        <position position="271"/>
    </location>
</feature>
<feature type="mutagenesis site" description="Lack of activity." evidence="3">
    <original>R</original>
    <variation>A</variation>
    <location>
        <position position="278"/>
    </location>
</feature>
<feature type="strand" evidence="12">
    <location>
        <begin position="4"/>
        <end position="10"/>
    </location>
</feature>
<feature type="helix" evidence="12">
    <location>
        <begin position="14"/>
        <end position="24"/>
    </location>
</feature>
<feature type="strand" evidence="12">
    <location>
        <begin position="29"/>
        <end position="35"/>
    </location>
</feature>
<feature type="turn" evidence="12">
    <location>
        <begin position="38"/>
        <end position="41"/>
    </location>
</feature>
<feature type="helix" evidence="12">
    <location>
        <begin position="44"/>
        <end position="46"/>
    </location>
</feature>
<feature type="helix" evidence="12">
    <location>
        <begin position="49"/>
        <end position="51"/>
    </location>
</feature>
<feature type="turn" evidence="12">
    <location>
        <begin position="52"/>
        <end position="54"/>
    </location>
</feature>
<feature type="helix" evidence="12">
    <location>
        <begin position="62"/>
        <end position="64"/>
    </location>
</feature>
<feature type="strand" evidence="12">
    <location>
        <begin position="69"/>
        <end position="73"/>
    </location>
</feature>
<feature type="helix" evidence="12">
    <location>
        <begin position="79"/>
        <end position="82"/>
    </location>
</feature>
<feature type="helix" evidence="12">
    <location>
        <begin position="84"/>
        <end position="88"/>
    </location>
</feature>
<feature type="strand" evidence="12">
    <location>
        <begin position="92"/>
        <end position="96"/>
    </location>
</feature>
<feature type="turn" evidence="12">
    <location>
        <begin position="100"/>
        <end position="102"/>
    </location>
</feature>
<feature type="helix" evidence="12">
    <location>
        <begin position="106"/>
        <end position="113"/>
    </location>
</feature>
<feature type="helix" evidence="12">
    <location>
        <begin position="119"/>
        <end position="121"/>
    </location>
</feature>
<feature type="strand" evidence="13">
    <location>
        <begin position="124"/>
        <end position="127"/>
    </location>
</feature>
<feature type="helix" evidence="12">
    <location>
        <begin position="130"/>
        <end position="137"/>
    </location>
</feature>
<feature type="strand" evidence="12">
    <location>
        <begin position="141"/>
        <end position="144"/>
    </location>
</feature>
<feature type="helix" evidence="12">
    <location>
        <begin position="148"/>
        <end position="163"/>
    </location>
</feature>
<feature type="strand" evidence="12">
    <location>
        <begin position="171"/>
        <end position="177"/>
    </location>
</feature>
<feature type="helix" evidence="12">
    <location>
        <begin position="179"/>
        <end position="182"/>
    </location>
</feature>
<feature type="helix" evidence="12">
    <location>
        <begin position="188"/>
        <end position="190"/>
    </location>
</feature>
<feature type="helix" evidence="12">
    <location>
        <begin position="192"/>
        <end position="195"/>
    </location>
</feature>
<feature type="strand" evidence="12">
    <location>
        <begin position="200"/>
        <end position="205"/>
    </location>
</feature>
<feature type="helix" evidence="12">
    <location>
        <begin position="210"/>
        <end position="215"/>
    </location>
</feature>
<feature type="strand" evidence="12">
    <location>
        <begin position="223"/>
        <end position="229"/>
    </location>
</feature>
<feature type="strand" evidence="12">
    <location>
        <begin position="236"/>
        <end position="244"/>
    </location>
</feature>
<feature type="helix" evidence="12">
    <location>
        <begin position="250"/>
        <end position="261"/>
    </location>
</feature>
<feature type="strand" evidence="12">
    <location>
        <begin position="267"/>
        <end position="269"/>
    </location>
</feature>
<feature type="strand" evidence="12">
    <location>
        <begin position="273"/>
        <end position="276"/>
    </location>
</feature>
<feature type="helix" evidence="12">
    <location>
        <begin position="282"/>
        <end position="285"/>
    </location>
</feature>
<feature type="strand" evidence="12">
    <location>
        <begin position="291"/>
        <end position="297"/>
    </location>
</feature>
<feature type="turn" evidence="12">
    <location>
        <begin position="299"/>
        <end position="301"/>
    </location>
</feature>
<feature type="strand" evidence="12">
    <location>
        <begin position="303"/>
        <end position="310"/>
    </location>
</feature>
<feature type="turn" evidence="12">
    <location>
        <begin position="312"/>
        <end position="317"/>
    </location>
</feature>
<feature type="helix" evidence="12">
    <location>
        <begin position="318"/>
        <end position="329"/>
    </location>
</feature>
<feature type="turn" evidence="12">
    <location>
        <begin position="333"/>
        <end position="336"/>
    </location>
</feature>
<name>LYSY_THET2</name>
<organism>
    <name type="scientific">Thermus thermophilus (strain ATCC BAA-163 / DSM 7039 / HB27)</name>
    <dbReference type="NCBI Taxonomy" id="262724"/>
    <lineage>
        <taxon>Bacteria</taxon>
        <taxon>Thermotogati</taxon>
        <taxon>Deinococcota</taxon>
        <taxon>Deinococci</taxon>
        <taxon>Thermales</taxon>
        <taxon>Thermaceae</taxon>
        <taxon>Thermus</taxon>
    </lineage>
</organism>